<comment type="similarity">
    <text evidence="1">Belongs to the UPF0201 family.</text>
</comment>
<dbReference type="EMBL" id="CP000855">
    <property type="protein sequence ID" value="ACJ16836.1"/>
    <property type="molecule type" value="Genomic_DNA"/>
</dbReference>
<dbReference type="RefSeq" id="WP_012572308.1">
    <property type="nucleotide sequence ID" value="NC_011529.1"/>
</dbReference>
<dbReference type="SMR" id="B6YXM3"/>
<dbReference type="STRING" id="523850.TON_1346"/>
<dbReference type="GeneID" id="7018374"/>
<dbReference type="KEGG" id="ton:TON_1346"/>
<dbReference type="PATRIC" id="fig|523850.10.peg.1354"/>
<dbReference type="eggNOG" id="arCOG01043">
    <property type="taxonomic scope" value="Archaea"/>
</dbReference>
<dbReference type="HOGENOM" id="CLU_134829_0_0_2"/>
<dbReference type="OrthoDB" id="7819at2157"/>
<dbReference type="Proteomes" id="UP000002727">
    <property type="component" value="Chromosome"/>
</dbReference>
<dbReference type="Gene3D" id="3.30.1440.10">
    <property type="match status" value="1"/>
</dbReference>
<dbReference type="HAMAP" id="MF_01112">
    <property type="entry name" value="UPF0201"/>
    <property type="match status" value="1"/>
</dbReference>
<dbReference type="InterPro" id="IPR002739">
    <property type="entry name" value="PAB1135-like"/>
</dbReference>
<dbReference type="InterPro" id="IPR022803">
    <property type="entry name" value="Ribosomal_uL5_dom_sf"/>
</dbReference>
<dbReference type="NCBIfam" id="NF001687">
    <property type="entry name" value="PRK00447.1"/>
    <property type="match status" value="1"/>
</dbReference>
<dbReference type="PANTHER" id="PTHR39652">
    <property type="entry name" value="UPF0201 PROTEIN TK1335"/>
    <property type="match status" value="1"/>
</dbReference>
<dbReference type="PANTHER" id="PTHR39652:SF1">
    <property type="entry name" value="UPF0201 PROTEIN TK1335"/>
    <property type="match status" value="1"/>
</dbReference>
<dbReference type="Pfam" id="PF01877">
    <property type="entry name" value="RNA_binding"/>
    <property type="match status" value="1"/>
</dbReference>
<dbReference type="SUPFAM" id="SSF55282">
    <property type="entry name" value="RL5-like"/>
    <property type="match status" value="1"/>
</dbReference>
<name>Y1346_THEON</name>
<feature type="chain" id="PRO_1000137122" description="UPF0201 protein TON_1346">
    <location>
        <begin position="1"/>
        <end position="135"/>
    </location>
</feature>
<organism>
    <name type="scientific">Thermococcus onnurineus (strain NA1)</name>
    <dbReference type="NCBI Taxonomy" id="523850"/>
    <lineage>
        <taxon>Archaea</taxon>
        <taxon>Methanobacteriati</taxon>
        <taxon>Methanobacteriota</taxon>
        <taxon>Thermococci</taxon>
        <taxon>Thermococcales</taxon>
        <taxon>Thermococcaceae</taxon>
        <taxon>Thermococcus</taxon>
    </lineage>
</organism>
<protein>
    <recommendedName>
        <fullName evidence="1">UPF0201 protein TON_1346</fullName>
    </recommendedName>
</protein>
<gene>
    <name type="ordered locus">TON_1346</name>
</gene>
<accession>B6YXM3</accession>
<proteinExistence type="inferred from homology"/>
<reference key="1">
    <citation type="journal article" date="2008" name="J. Bacteriol.">
        <title>The complete genome sequence of Thermococcus onnurineus NA1 reveals a mixed heterotrophic and carboxydotrophic metabolism.</title>
        <authorList>
            <person name="Lee H.S."/>
            <person name="Kang S.G."/>
            <person name="Bae S.S."/>
            <person name="Lim J.K."/>
            <person name="Cho Y."/>
            <person name="Kim Y.J."/>
            <person name="Jeon J.H."/>
            <person name="Cha S.-S."/>
            <person name="Kwon K.K."/>
            <person name="Kim H.-T."/>
            <person name="Park C.-J."/>
            <person name="Lee H.-W."/>
            <person name="Kim S.I."/>
            <person name="Chun J."/>
            <person name="Colwell R.R."/>
            <person name="Kim S.-J."/>
            <person name="Lee J.-H."/>
        </authorList>
    </citation>
    <scope>NUCLEOTIDE SEQUENCE [LARGE SCALE GENOMIC DNA]</scope>
    <source>
        <strain>NA1</strain>
    </source>
</reference>
<evidence type="ECO:0000255" key="1">
    <source>
        <dbReference type="HAMAP-Rule" id="MF_01112"/>
    </source>
</evidence>
<sequence>MFEEVEVEAYVYPTEDIEKVKRAMLNLIPDLEFEAFDRGDYIILTGKTRSKKALQRLYELFRGQAILDTARSFLEEGYFGEEIIIKVNKQAAYAGVVNFNEESPLGPITIIIRTKDPQRLMKWLAPRTKDGVPIE</sequence>